<dbReference type="EC" id="5.4.2.12" evidence="1"/>
<dbReference type="EMBL" id="CP000362">
    <property type="protein sequence ID" value="ABG30059.1"/>
    <property type="molecule type" value="Genomic_DNA"/>
</dbReference>
<dbReference type="RefSeq" id="WP_011566681.1">
    <property type="nucleotide sequence ID" value="NC_008209.1"/>
</dbReference>
<dbReference type="SMR" id="Q16D84"/>
<dbReference type="STRING" id="375451.RD1_0335"/>
<dbReference type="KEGG" id="rde:RD1_0335"/>
<dbReference type="eggNOG" id="COG0696">
    <property type="taxonomic scope" value="Bacteria"/>
</dbReference>
<dbReference type="HOGENOM" id="CLU_026099_2_0_5"/>
<dbReference type="OrthoDB" id="9800863at2"/>
<dbReference type="UniPathway" id="UPA00109">
    <property type="reaction ID" value="UER00186"/>
</dbReference>
<dbReference type="Proteomes" id="UP000007029">
    <property type="component" value="Chromosome"/>
</dbReference>
<dbReference type="GO" id="GO:0005829">
    <property type="term" value="C:cytosol"/>
    <property type="evidence" value="ECO:0007669"/>
    <property type="project" value="TreeGrafter"/>
</dbReference>
<dbReference type="GO" id="GO:0030145">
    <property type="term" value="F:manganese ion binding"/>
    <property type="evidence" value="ECO:0007669"/>
    <property type="project" value="UniProtKB-UniRule"/>
</dbReference>
<dbReference type="GO" id="GO:0004619">
    <property type="term" value="F:phosphoglycerate mutase activity"/>
    <property type="evidence" value="ECO:0007669"/>
    <property type="project" value="UniProtKB-EC"/>
</dbReference>
<dbReference type="GO" id="GO:0006007">
    <property type="term" value="P:glucose catabolic process"/>
    <property type="evidence" value="ECO:0007669"/>
    <property type="project" value="InterPro"/>
</dbReference>
<dbReference type="GO" id="GO:0006096">
    <property type="term" value="P:glycolytic process"/>
    <property type="evidence" value="ECO:0007669"/>
    <property type="project" value="UniProtKB-UniRule"/>
</dbReference>
<dbReference type="CDD" id="cd16010">
    <property type="entry name" value="iPGM"/>
    <property type="match status" value="1"/>
</dbReference>
<dbReference type="FunFam" id="3.40.1450.10:FF:000002">
    <property type="entry name" value="2,3-bisphosphoglycerate-independent phosphoglycerate mutase"/>
    <property type="match status" value="1"/>
</dbReference>
<dbReference type="Gene3D" id="3.40.720.10">
    <property type="entry name" value="Alkaline Phosphatase, subunit A"/>
    <property type="match status" value="1"/>
</dbReference>
<dbReference type="Gene3D" id="3.40.1450.10">
    <property type="entry name" value="BPG-independent phosphoglycerate mutase, domain B"/>
    <property type="match status" value="1"/>
</dbReference>
<dbReference type="HAMAP" id="MF_01038">
    <property type="entry name" value="GpmI"/>
    <property type="match status" value="1"/>
</dbReference>
<dbReference type="InterPro" id="IPR017850">
    <property type="entry name" value="Alkaline_phosphatase_core_sf"/>
</dbReference>
<dbReference type="InterPro" id="IPR011258">
    <property type="entry name" value="BPG-indep_PGM_N"/>
</dbReference>
<dbReference type="InterPro" id="IPR006124">
    <property type="entry name" value="Metalloenzyme"/>
</dbReference>
<dbReference type="InterPro" id="IPR036646">
    <property type="entry name" value="PGAM_B_sf"/>
</dbReference>
<dbReference type="InterPro" id="IPR005995">
    <property type="entry name" value="Pgm_bpd_ind"/>
</dbReference>
<dbReference type="NCBIfam" id="TIGR01307">
    <property type="entry name" value="pgm_bpd_ind"/>
    <property type="match status" value="1"/>
</dbReference>
<dbReference type="PANTHER" id="PTHR31637">
    <property type="entry name" value="2,3-BISPHOSPHOGLYCERATE-INDEPENDENT PHOSPHOGLYCERATE MUTASE"/>
    <property type="match status" value="1"/>
</dbReference>
<dbReference type="PANTHER" id="PTHR31637:SF0">
    <property type="entry name" value="2,3-BISPHOSPHOGLYCERATE-INDEPENDENT PHOSPHOGLYCERATE MUTASE"/>
    <property type="match status" value="1"/>
</dbReference>
<dbReference type="Pfam" id="PF06415">
    <property type="entry name" value="iPGM_N"/>
    <property type="match status" value="1"/>
</dbReference>
<dbReference type="Pfam" id="PF01676">
    <property type="entry name" value="Metalloenzyme"/>
    <property type="match status" value="1"/>
</dbReference>
<dbReference type="PIRSF" id="PIRSF001492">
    <property type="entry name" value="IPGAM"/>
    <property type="match status" value="1"/>
</dbReference>
<dbReference type="SUPFAM" id="SSF64158">
    <property type="entry name" value="2,3-Bisphosphoglycerate-independent phosphoglycerate mutase, substrate-binding domain"/>
    <property type="match status" value="1"/>
</dbReference>
<dbReference type="SUPFAM" id="SSF53649">
    <property type="entry name" value="Alkaline phosphatase-like"/>
    <property type="match status" value="1"/>
</dbReference>
<reference key="1">
    <citation type="journal article" date="2007" name="J. Bacteriol.">
        <title>The complete genome sequence of Roseobacter denitrificans reveals a mixotrophic rather than photosynthetic metabolism.</title>
        <authorList>
            <person name="Swingley W.D."/>
            <person name="Sadekar S."/>
            <person name="Mastrian S.D."/>
            <person name="Matthies H.J."/>
            <person name="Hao J."/>
            <person name="Ramos H."/>
            <person name="Acharya C.R."/>
            <person name="Conrad A.L."/>
            <person name="Taylor H.L."/>
            <person name="Dejesa L.C."/>
            <person name="Shah M.K."/>
            <person name="O'Huallachain M.E."/>
            <person name="Lince M.T."/>
            <person name="Blankenship R.E."/>
            <person name="Beatty J.T."/>
            <person name="Touchman J.W."/>
        </authorList>
    </citation>
    <scope>NUCLEOTIDE SEQUENCE [LARGE SCALE GENOMIC DNA]</scope>
    <source>
        <strain>ATCC 33942 / OCh 114</strain>
    </source>
</reference>
<protein>
    <recommendedName>
        <fullName evidence="1">2,3-bisphosphoglycerate-independent phosphoglycerate mutase</fullName>
        <shortName evidence="1">BPG-independent PGAM</shortName>
        <shortName evidence="1">Phosphoglyceromutase</shortName>
        <shortName evidence="1">iPGM</shortName>
        <ecNumber evidence="1">5.4.2.12</ecNumber>
    </recommendedName>
</protein>
<organism>
    <name type="scientific">Roseobacter denitrificans (strain ATCC 33942 / OCh 114)</name>
    <name type="common">Erythrobacter sp. (strain OCh 114)</name>
    <name type="synonym">Roseobacter denitrificans</name>
    <dbReference type="NCBI Taxonomy" id="375451"/>
    <lineage>
        <taxon>Bacteria</taxon>
        <taxon>Pseudomonadati</taxon>
        <taxon>Pseudomonadota</taxon>
        <taxon>Alphaproteobacteria</taxon>
        <taxon>Rhodobacterales</taxon>
        <taxon>Roseobacteraceae</taxon>
        <taxon>Roseobacter</taxon>
    </lineage>
</organism>
<keyword id="KW-0324">Glycolysis</keyword>
<keyword id="KW-0413">Isomerase</keyword>
<keyword id="KW-0464">Manganese</keyword>
<keyword id="KW-0479">Metal-binding</keyword>
<keyword id="KW-1185">Reference proteome</keyword>
<comment type="function">
    <text evidence="1">Catalyzes the interconversion of 2-phosphoglycerate and 3-phosphoglycerate.</text>
</comment>
<comment type="catalytic activity">
    <reaction evidence="1">
        <text>(2R)-2-phosphoglycerate = (2R)-3-phosphoglycerate</text>
        <dbReference type="Rhea" id="RHEA:15901"/>
        <dbReference type="ChEBI" id="CHEBI:58272"/>
        <dbReference type="ChEBI" id="CHEBI:58289"/>
        <dbReference type="EC" id="5.4.2.12"/>
    </reaction>
</comment>
<comment type="cofactor">
    <cofactor evidence="1">
        <name>Mn(2+)</name>
        <dbReference type="ChEBI" id="CHEBI:29035"/>
    </cofactor>
    <text evidence="1">Binds 2 manganese ions per subunit.</text>
</comment>
<comment type="pathway">
    <text evidence="1">Carbohydrate degradation; glycolysis; pyruvate from D-glyceraldehyde 3-phosphate: step 3/5.</text>
</comment>
<comment type="subunit">
    <text evidence="1">Monomer.</text>
</comment>
<comment type="similarity">
    <text evidence="1">Belongs to the BPG-independent phosphoglycerate mutase family.</text>
</comment>
<gene>
    <name evidence="1" type="primary">gpmI</name>
    <name type="ordered locus">RD1_0335</name>
</gene>
<accession>Q16D84</accession>
<evidence type="ECO:0000255" key="1">
    <source>
        <dbReference type="HAMAP-Rule" id="MF_01038"/>
    </source>
</evidence>
<sequence>MTRPKPVALCILDGWGLSERREGNAPLLADTPNMDRLMATCPHATLTTFGPDVGLPSGQMGNSEVGHTNIGAGRVVAMDLGQIDLAIEEGLFAQNSRLRAFIVTLQDSGGTAHLMGVVSDGGVHGHINHMIAAAKALADENIPVVIHALTDGRDVAPRSALGYFETLQAALPDGVEIATVTGRYFAMDRDNRWDRVSKAYQAIVTGTGRKAASASDAVDQAYGQGENDEFISPTVLGGYTGAKDNDGFFCLNFRADRAREIMAAIGDPDFTAFETGARPKWASLMGMAQYSEAHANYMTTMYPKPEIVNTLGDWVAQQGLRQYRLAETEKYPHVTFFLNGGEEVSFDGEDRLMPKSPDVATYDLQPEMSSKEVTDAFVAAIEEGYDLIVVNYANPDMVGHTGDLQAAMKACEAVDQGLGRVLAALEKAGGAMIVTADHGNCDVMIDPETGGPHTAHTLNPVPVVVVGAPDGATLRDGRLADLAPTILHLMGLESPKEMTGKCLIS</sequence>
<proteinExistence type="inferred from homology"/>
<name>GPMI_ROSDO</name>
<feature type="chain" id="PRO_1000063997" description="2,3-bisphosphoglycerate-independent phosphoglycerate mutase">
    <location>
        <begin position="1"/>
        <end position="505"/>
    </location>
</feature>
<feature type="active site" description="Phosphoserine intermediate" evidence="1">
    <location>
        <position position="63"/>
    </location>
</feature>
<feature type="binding site" evidence="1">
    <location>
        <position position="13"/>
    </location>
    <ligand>
        <name>Mn(2+)</name>
        <dbReference type="ChEBI" id="CHEBI:29035"/>
        <label>2</label>
    </ligand>
</feature>
<feature type="binding site" evidence="1">
    <location>
        <position position="63"/>
    </location>
    <ligand>
        <name>Mn(2+)</name>
        <dbReference type="ChEBI" id="CHEBI:29035"/>
        <label>2</label>
    </ligand>
</feature>
<feature type="binding site" evidence="1">
    <location>
        <position position="124"/>
    </location>
    <ligand>
        <name>substrate</name>
    </ligand>
</feature>
<feature type="binding site" evidence="1">
    <location>
        <begin position="153"/>
        <end position="154"/>
    </location>
    <ligand>
        <name>substrate</name>
    </ligand>
</feature>
<feature type="binding site" evidence="1">
    <location>
        <position position="183"/>
    </location>
    <ligand>
        <name>substrate</name>
    </ligand>
</feature>
<feature type="binding site" evidence="1">
    <location>
        <position position="189"/>
    </location>
    <ligand>
        <name>substrate</name>
    </ligand>
</feature>
<feature type="binding site" evidence="1">
    <location>
        <begin position="254"/>
        <end position="257"/>
    </location>
    <ligand>
        <name>substrate</name>
    </ligand>
</feature>
<feature type="binding site" evidence="1">
    <location>
        <position position="330"/>
    </location>
    <ligand>
        <name>substrate</name>
    </ligand>
</feature>
<feature type="binding site" evidence="1">
    <location>
        <position position="396"/>
    </location>
    <ligand>
        <name>Mn(2+)</name>
        <dbReference type="ChEBI" id="CHEBI:29035"/>
        <label>1</label>
    </ligand>
</feature>
<feature type="binding site" evidence="1">
    <location>
        <position position="400"/>
    </location>
    <ligand>
        <name>Mn(2+)</name>
        <dbReference type="ChEBI" id="CHEBI:29035"/>
        <label>1</label>
    </ligand>
</feature>
<feature type="binding site" evidence="1">
    <location>
        <position position="437"/>
    </location>
    <ligand>
        <name>Mn(2+)</name>
        <dbReference type="ChEBI" id="CHEBI:29035"/>
        <label>2</label>
    </ligand>
</feature>
<feature type="binding site" evidence="1">
    <location>
        <position position="438"/>
    </location>
    <ligand>
        <name>Mn(2+)</name>
        <dbReference type="ChEBI" id="CHEBI:29035"/>
        <label>2</label>
    </ligand>
</feature>
<feature type="binding site" evidence="1">
    <location>
        <position position="456"/>
    </location>
    <ligand>
        <name>Mn(2+)</name>
        <dbReference type="ChEBI" id="CHEBI:29035"/>
        <label>1</label>
    </ligand>
</feature>